<sequence>MVRVAVAGGTGGVGYAIVDALKAQTEHEFIVLSRTESPEYAAKNNVKVVSIDYSDVSQISKILDEHHIHTVISALCIVSKEHSDSQLNLVRGAAGSQSVKRFVPSEYGSAYEEKHALARPSTGLKAVAVKELAKTHLEYTSFVNGLFLDYLCMPTVPSHLAAGIRFFDIPSRTSVGIGSGTVPLVMTHTRDVGRFVVASLSLPKWENRSFIVGDRQSWHDVINIAGKITGEKWPSLRPSKSSGSHEPAHRAAYSASLKEHGDWFESGTFSSTLSSGSVYLNELFPEIIPSYGRRWPQDFD</sequence>
<comment type="function">
    <text evidence="1 2 3 8">Oxidoreductase; part of the gene cluster A that mediates the biosynthesis of botcinic acid and its botcinin derivatives, acetate-derived polyketides that contribute to virulence when combined with the sesquiterpene botrydial (PubMed:18208491, PubMed:21722295). Botcinic acid and its derivatives have been shown to induce chlorosis and necrosis during host plant infection, but also have antifungal activities (PubMed:18208491, PubMed:21722295). Two polyketide synthases, BOA6 and BOA9, are involved in the biosynthesis of botcinins. BOA6 mediates the formation of the per-methylated tetraketide core by condensation of four units of malonyl-CoA with one unit of acetyl-CoA, which would be methylated in activated methylene groups to yield a bicyclic acid intermediate that could then either be converted to botrylactone derivatives or lose the starter acetate unit through a retro-Claisen type C-C bond cleavage to yield botcinin derivatives (PubMed:23203902). The second polyketide synthase, BOA9, is probably required for the biosynthesis of the tetraketide side chain of botcinins (Probable). The methyltransferase (MT) domain within BOA6 is probably responsible for the incorporation of four methyl groups (Probable). The trans-enoyl reductase BOA5 might take over the enoyl reductase function of BOA6 that misses an ER domain (Probable). The monooxygenases BOA2, BOA3 and BOA4 might be involved in further hydroxylations at C4, C5 and C8, whereas BOA7, close to BOA9, could potentially be involved in the hydroxylation at C4 in the side chain of botcinins (Probable).</text>
</comment>
<comment type="pathway">
    <text evidence="7">Polyketide biosynthesis.</text>
</comment>
<comment type="induction">
    <text evidence="1 2">Expression of the botcinic acid clusters genes is coregulated by BCG1 during both in vitro and in planta growth.</text>
</comment>
<comment type="similarity">
    <text evidence="6">Belongs to the NmrA-type oxidoreductase family. Isoflavone reductase subfamily.</text>
</comment>
<evidence type="ECO:0000269" key="1">
    <source>
    </source>
</evidence>
<evidence type="ECO:0000269" key="2">
    <source>
    </source>
</evidence>
<evidence type="ECO:0000269" key="3">
    <source>
    </source>
</evidence>
<evidence type="ECO:0000303" key="4">
    <source>
    </source>
</evidence>
<evidence type="ECO:0000303" key="5">
    <source>
    </source>
</evidence>
<evidence type="ECO:0000305" key="6"/>
<evidence type="ECO:0000305" key="7">
    <source>
    </source>
</evidence>
<evidence type="ECO:0000305" key="8">
    <source>
    </source>
</evidence>
<accession>B1GVX5</accession>
<feature type="chain" id="PRO_0000444657" description="Oxidoreductase BOA1">
    <location>
        <begin position="1"/>
        <end position="300"/>
    </location>
</feature>
<gene>
    <name evidence="5" type="primary">BOA1</name>
    <name evidence="4" type="synonym">ORF1</name>
</gene>
<proteinExistence type="evidence at transcript level"/>
<reference key="1">
    <citation type="journal article" date="2008" name="Mol. Microbiol.">
        <title>The Galpha subunit BCG1, the phospholipase C (BcPLC1) and the calcineurin phosphatase co-ordinately regulate gene expression in the grey mould fungus Botrytis cinerea.</title>
        <authorList>
            <person name="Schumacher J."/>
            <person name="Viaud M."/>
            <person name="Simon A."/>
            <person name="Tudzynski B."/>
        </authorList>
    </citation>
    <scope>NUCLEOTIDE SEQUENCE [GENOMIC DNA]</scope>
    <scope>INDUCTION</scope>
    <source>
        <strain>B05.10</strain>
    </source>
</reference>
<reference key="2">
    <citation type="journal article" date="2011" name="Mol. Plant Pathol.">
        <title>The Botrytis cinerea phytotoxin botcinic acid requires two polyketide synthases for production and has a redundant role in virulence with botrydial.</title>
        <authorList>
            <person name="Dalmais B."/>
            <person name="Schumacher J."/>
            <person name="Moraga J."/>
            <person name="Le Pecheur P."/>
            <person name="Tudzynski B."/>
            <person name="Collado I.G."/>
            <person name="Viaud M."/>
        </authorList>
    </citation>
    <scope>FUNCTION</scope>
    <scope>INDUCTION</scope>
    <scope>PATHWAY</scope>
</reference>
<reference key="3">
    <citation type="journal article" date="2013" name="ChemBioChem">
        <title>A shared biosynthetic pathway for botcinins and botrylactones revealed through gene deletions.</title>
        <authorList>
            <person name="Massaroli M."/>
            <person name="Moraga J."/>
            <person name="Bastos Borges K."/>
            <person name="Ramirez-Fernandez J."/>
            <person name="Viaud M."/>
            <person name="Gonzalez Collado I."/>
            <person name="Duran-Patron R."/>
            <person name="Hernandez-Galan R."/>
        </authorList>
    </citation>
    <scope>FUNCTION</scope>
</reference>
<protein>
    <recommendedName>
        <fullName evidence="5">Oxidoreductase BOA1</fullName>
        <ecNumber evidence="7">1.3.1.-</ecNumber>
    </recommendedName>
    <alternativeName>
        <fullName evidence="5">Botcinic acid biosynthesis cluster A protein 1</fullName>
    </alternativeName>
</protein>
<name>BOA1_BOTFB</name>
<keyword id="KW-0521">NADP</keyword>
<keyword id="KW-0560">Oxidoreductase</keyword>
<keyword id="KW-0843">Virulence</keyword>
<organism>
    <name type="scientific">Botryotinia fuckeliana (strain B05.10)</name>
    <name type="common">Noble rot fungus</name>
    <name type="synonym">Botrytis cinerea</name>
    <dbReference type="NCBI Taxonomy" id="332648"/>
    <lineage>
        <taxon>Eukaryota</taxon>
        <taxon>Fungi</taxon>
        <taxon>Dikarya</taxon>
        <taxon>Ascomycota</taxon>
        <taxon>Pezizomycotina</taxon>
        <taxon>Leotiomycetes</taxon>
        <taxon>Helotiales</taxon>
        <taxon>Sclerotiniaceae</taxon>
        <taxon>Botrytis</taxon>
    </lineage>
</organism>
<dbReference type="EC" id="1.3.1.-" evidence="7"/>
<dbReference type="EMBL" id="AM930230">
    <property type="protein sequence ID" value="CAP58784.1"/>
    <property type="molecule type" value="Genomic_DNA"/>
</dbReference>
<dbReference type="SMR" id="B1GVX5"/>
<dbReference type="GO" id="GO:0016491">
    <property type="term" value="F:oxidoreductase activity"/>
    <property type="evidence" value="ECO:0007669"/>
    <property type="project" value="UniProtKB-KW"/>
</dbReference>
<dbReference type="Gene3D" id="3.40.50.720">
    <property type="entry name" value="NAD(P)-binding Rossmann-like Domain"/>
    <property type="match status" value="1"/>
</dbReference>
<dbReference type="Gene3D" id="3.90.25.10">
    <property type="entry name" value="UDP-galactose 4-epimerase, domain 1"/>
    <property type="match status" value="1"/>
</dbReference>
<dbReference type="InterPro" id="IPR036291">
    <property type="entry name" value="NAD(P)-bd_dom_sf"/>
</dbReference>
<dbReference type="InterPro" id="IPR008030">
    <property type="entry name" value="NmrA-like"/>
</dbReference>
<dbReference type="InterPro" id="IPR051609">
    <property type="entry name" value="NmrA/Isoflavone_reductase-like"/>
</dbReference>
<dbReference type="PANTHER" id="PTHR47706:SF4">
    <property type="entry name" value="NMRA-LIKE DOMAIN-CONTAINING PROTEIN"/>
    <property type="match status" value="1"/>
</dbReference>
<dbReference type="PANTHER" id="PTHR47706">
    <property type="entry name" value="NMRA-LIKE FAMILY PROTEIN"/>
    <property type="match status" value="1"/>
</dbReference>
<dbReference type="Pfam" id="PF05368">
    <property type="entry name" value="NmrA"/>
    <property type="match status" value="1"/>
</dbReference>
<dbReference type="SUPFAM" id="SSF51735">
    <property type="entry name" value="NAD(P)-binding Rossmann-fold domains"/>
    <property type="match status" value="1"/>
</dbReference>